<protein>
    <recommendedName>
        <fullName>Keratin-associated protein 10-5</fullName>
    </recommendedName>
    <alternativeName>
        <fullName>High sulfur keratin-associated protein 10.5</fullName>
    </alternativeName>
    <alternativeName>
        <fullName>Keratin-associated protein 10.5</fullName>
    </alternativeName>
    <alternativeName>
        <fullName>Keratin-associated protein 18-5</fullName>
    </alternativeName>
    <alternativeName>
        <fullName>Keratin-associated protein 18.5</fullName>
    </alternativeName>
</protein>
<sequence length="271" mass="27537">MAACTMSVCSSACSDSWRVDDCPESCCEPPCGTAPCLTLVCTPVSCVSSPCCQAACEPSPCQSGCTSSCTPSCCQPACCASSPCQQACCVPVCCKPVCCLPTCSKDSSSCCQQSSCQPTCCASSSCQQSCCVPVCCKPVCCVPTCSEDSSSCCQHSSCQPTCCTSSPCQQSCYVPVCCKPVCCKPICCVPVCSGASTSCCQQSSCQPACCTTSCCRPSSSVSLLCRPICRPACCLPISSCCAPASSYQASCCRPASCVSLLCRPACSPLAC</sequence>
<comment type="function">
    <text>In the hair cortex, hair keratin intermediate filaments are embedded in an interfilamentous matrix, consisting of hair keratin-associated proteins (KRTAP), which are essential for the formation of a rigid and resistant hair shaft through their extensive disulfide bond cross-linking with abundant cysteine residues of hair keratins. The matrix proteins include the high-sulfur and high-glycine-tyrosine keratins.</text>
</comment>
<comment type="subunit">
    <text>Interacts with hair keratins.</text>
</comment>
<comment type="interaction">
    <interactant intactId="EBI-10172150">
        <id>P60370</id>
    </interactant>
    <interactant intactId="EBI-10173507">
        <id>Q6UY14-3</id>
        <label>ADAMTSL4</label>
    </interactant>
    <organismsDiffer>false</organismsDiffer>
    <experiments>6</experiments>
</comment>
<comment type="interaction">
    <interactant intactId="EBI-10172150">
        <id>P60370</id>
    </interactant>
    <interactant intactId="EBI-8637627">
        <id>Q8WTP8</id>
        <label>AEN</label>
    </interactant>
    <organismsDiffer>false</organismsDiffer>
    <experiments>3</experiments>
</comment>
<comment type="interaction">
    <interactant intactId="EBI-10172150">
        <id>P60370</id>
    </interactant>
    <interactant intactId="EBI-2558314">
        <id>P43353</id>
        <label>ALDH3B1</label>
    </interactant>
    <organismsDiffer>false</organismsDiffer>
    <experiments>3</experiments>
</comment>
<comment type="interaction">
    <interactant intactId="EBI-10172150">
        <id>P60370</id>
    </interactant>
    <interactant intactId="EBI-10187270">
        <id>Q9Y2J4-4</id>
        <label>AMOTL2</label>
    </interactant>
    <organismsDiffer>false</organismsDiffer>
    <experiments>3</experiments>
</comment>
<comment type="interaction">
    <interactant intactId="EBI-10172150">
        <id>P60370</id>
    </interactant>
    <interactant intactId="EBI-10174813">
        <id>A8KA13</id>
        <label>BCL6B</label>
    </interactant>
    <organismsDiffer>false</organismsDiffer>
    <experiments>3</experiments>
</comment>
<comment type="interaction">
    <interactant intactId="EBI-10172150">
        <id>P60370</id>
    </interactant>
    <interactant intactId="EBI-10174327">
        <id>A8K571</id>
        <label>BMP7</label>
    </interactant>
    <organismsDiffer>false</organismsDiffer>
    <experiments>3</experiments>
</comment>
<comment type="interaction">
    <interactant intactId="EBI-10172150">
        <id>P60370</id>
    </interactant>
    <interactant intactId="EBI-358049">
        <id>Q13895</id>
        <label>BYSL</label>
    </interactant>
    <organismsDiffer>false</organismsDiffer>
    <experiments>5</experiments>
</comment>
<comment type="interaction">
    <interactant intactId="EBI-10172150">
        <id>P60370</id>
    </interactant>
    <interactant intactId="EBI-6660291">
        <id>Q6NUJ2</id>
        <label>C11orf87</label>
    </interactant>
    <organismsDiffer>false</organismsDiffer>
    <experiments>3</experiments>
</comment>
<comment type="interaction">
    <interactant intactId="EBI-10172150">
        <id>P60370</id>
    </interactant>
    <interactant intactId="EBI-12877892">
        <id>Q8WW18</id>
        <label>C17orf50</label>
    </interactant>
    <organismsDiffer>false</organismsDiffer>
    <experiments>3</experiments>
</comment>
<comment type="interaction">
    <interactant intactId="EBI-10172150">
        <id>P60370</id>
    </interactant>
    <interactant intactId="EBI-751319">
        <id>Q9H257</id>
        <label>CARD9</label>
    </interactant>
    <organismsDiffer>false</organismsDiffer>
    <experiments>3</experiments>
</comment>
<comment type="interaction">
    <interactant intactId="EBI-10172150">
        <id>P60370</id>
    </interactant>
    <interactant intactId="EBI-744545">
        <id>Q8NEC5</id>
        <label>CATSPER1</label>
    </interactant>
    <organismsDiffer>false</organismsDiffer>
    <experiments>3</experiments>
</comment>
<comment type="interaction">
    <interactant intactId="EBI-10172150">
        <id>P60370</id>
    </interactant>
    <interactant intactId="EBI-947551">
        <id>Q9H2X0</id>
        <label>CHRD</label>
    </interactant>
    <organismsDiffer>false</organismsDiffer>
    <experiments>3</experiments>
</comment>
<comment type="interaction">
    <interactant intactId="EBI-10172150">
        <id>P60370</id>
    </interactant>
    <interactant intactId="EBI-741032">
        <id>Q8NE01</id>
        <label>CNNM3</label>
    </interactant>
    <organismsDiffer>false</organismsDiffer>
    <experiments>3</experiments>
</comment>
<comment type="interaction">
    <interactant intactId="EBI-10172150">
        <id>P60370</id>
    </interactant>
    <interactant intactId="EBI-10192698">
        <id>Q02930-3</id>
        <label>CREB5</label>
    </interactant>
    <organismsDiffer>false</organismsDiffer>
    <experiments>6</experiments>
</comment>
<comment type="interaction">
    <interactant intactId="EBI-10172150">
        <id>P60370</id>
    </interactant>
    <interactant intactId="EBI-3867333">
        <id>A8MQ03</id>
        <label>CYSRT1</label>
    </interactant>
    <organismsDiffer>false</organismsDiffer>
    <experiments>3</experiments>
</comment>
<comment type="interaction">
    <interactant intactId="EBI-10172150">
        <id>P60370</id>
    </interactant>
    <interactant intactId="EBI-1051531">
        <id>Q6P158</id>
        <label>DHX57</label>
    </interactant>
    <organismsDiffer>false</organismsDiffer>
    <experiments>3</experiments>
</comment>
<comment type="interaction">
    <interactant intactId="EBI-10172150">
        <id>P60370</id>
    </interactant>
    <interactant intactId="EBI-2859983">
        <id>P42892</id>
        <label>ECE1</label>
    </interactant>
    <organismsDiffer>false</organismsDiffer>
    <experiments>3</experiments>
</comment>
<comment type="interaction">
    <interactant intactId="EBI-10172150">
        <id>P60370</id>
    </interactant>
    <interactant intactId="EBI-398610">
        <id>O60573</id>
        <label>EIF4E2</label>
    </interactant>
    <organismsDiffer>false</organismsDiffer>
    <experiments>3</experiments>
</comment>
<comment type="interaction">
    <interactant intactId="EBI-10172150">
        <id>P60370</id>
    </interactant>
    <interactant intactId="EBI-744099">
        <id>Q9H0I2</id>
        <label>ENKD1</label>
    </interactant>
    <organismsDiffer>false</organismsDiffer>
    <experiments>3</experiments>
</comment>
<comment type="interaction">
    <interactant intactId="EBI-10172150">
        <id>P60370</id>
    </interactant>
    <interactant intactId="EBI-751192">
        <id>Q5HYJ3</id>
        <label>FAM76B</label>
    </interactant>
    <organismsDiffer>false</organismsDiffer>
    <experiments>5</experiments>
</comment>
<comment type="interaction">
    <interactant intactId="EBI-10172150">
        <id>P60370</id>
    </interactant>
    <interactant intactId="EBI-11956087">
        <id>Q5HYJ3-3</id>
        <label>FAM76B</label>
    </interactant>
    <organismsDiffer>false</organismsDiffer>
    <experiments>3</experiments>
</comment>
<comment type="interaction">
    <interactant intactId="EBI-10172150">
        <id>P60370</id>
    </interactant>
    <interactant intactId="EBI-2513774">
        <id>O95363</id>
        <label>FARS2</label>
    </interactant>
    <organismsDiffer>false</organismsDiffer>
    <experiments>3</experiments>
</comment>
<comment type="interaction">
    <interactant intactId="EBI-10172150">
        <id>P60370</id>
    </interactant>
    <interactant intactId="EBI-719816">
        <id>Q9NWN3</id>
        <label>FBXO34</label>
    </interactant>
    <organismsDiffer>false</organismsDiffer>
    <experiments>3</experiments>
</comment>
<comment type="interaction">
    <interactant intactId="EBI-10172150">
        <id>P60370</id>
    </interactant>
    <interactant intactId="EBI-11977403">
        <id>A0A0C3SFZ9</id>
        <label>FCHO1</label>
    </interactant>
    <organismsDiffer>false</organismsDiffer>
    <experiments>3</experiments>
</comment>
<comment type="interaction">
    <interactant intactId="EBI-10172150">
        <id>P60370</id>
    </interactant>
    <interactant intactId="EBI-3909284">
        <id>P15976</id>
        <label>GATA1</label>
    </interactant>
    <organismsDiffer>false</organismsDiffer>
    <experiments>3</experiments>
</comment>
<comment type="interaction">
    <interactant intactId="EBI-10172150">
        <id>P60370</id>
    </interactant>
    <interactant intactId="EBI-374781">
        <id>O76003</id>
        <label>GLRX3</label>
    </interactant>
    <organismsDiffer>false</organismsDiffer>
    <experiments>6</experiments>
</comment>
<comment type="interaction">
    <interactant intactId="EBI-10172150">
        <id>P60370</id>
    </interactant>
    <interactant intactId="EBI-4291090">
        <id>Q9Y223</id>
        <label>GNE</label>
    </interactant>
    <organismsDiffer>false</organismsDiffer>
    <experiments>3</experiments>
</comment>
<comment type="interaction">
    <interactant intactId="EBI-10172150">
        <id>P60370</id>
    </interactant>
    <interactant intactId="EBI-10181276">
        <id>Q0D2H9</id>
        <label>GOLGA8DP</label>
    </interactant>
    <organismsDiffer>false</organismsDiffer>
    <experiments>3</experiments>
</comment>
<comment type="interaction">
    <interactant intactId="EBI-10172150">
        <id>P60370</id>
    </interactant>
    <interactant intactId="EBI-747421">
        <id>Q03014</id>
        <label>HHEX</label>
    </interactant>
    <organismsDiffer>false</organismsDiffer>
    <experiments>3</experiments>
</comment>
<comment type="interaction">
    <interactant intactId="EBI-10172150">
        <id>P60370</id>
    </interactant>
    <interactant intactId="EBI-740785">
        <id>P49639</id>
        <label>HOXA1</label>
    </interactant>
    <organismsDiffer>false</organismsDiffer>
    <experiments>6</experiments>
</comment>
<comment type="interaction">
    <interactant intactId="EBI-10172150">
        <id>P60370</id>
    </interactant>
    <interactant intactId="EBI-749311">
        <id>P37235</id>
        <label>HPCAL1</label>
    </interactant>
    <organismsDiffer>false</organismsDiffer>
    <experiments>3</experiments>
</comment>
<comment type="interaction">
    <interactant intactId="EBI-10172150">
        <id>P60370</id>
    </interactant>
    <interactant intactId="EBI-11749135">
        <id>Q8IUG1</id>
        <label>KRTAP1-3</label>
    </interactant>
    <organismsDiffer>false</organismsDiffer>
    <experiments>3</experiments>
</comment>
<comment type="interaction">
    <interactant intactId="EBI-10172150">
        <id>P60370</id>
    </interactant>
    <interactant intactId="EBI-10172150">
        <id>P60370</id>
        <label>KRTAP10-5</label>
    </interactant>
    <organismsDiffer>false</organismsDiffer>
    <experiments>3</experiments>
</comment>
<comment type="interaction">
    <interactant intactId="EBI-10172150">
        <id>P60370</id>
    </interactant>
    <interactant intactId="EBI-12012928">
        <id>P60371</id>
        <label>KRTAP10-6</label>
    </interactant>
    <organismsDiffer>false</organismsDiffer>
    <experiments>3</experiments>
</comment>
<comment type="interaction">
    <interactant intactId="EBI-10172150">
        <id>P60370</id>
    </interactant>
    <interactant intactId="EBI-10172290">
        <id>P60409</id>
        <label>KRTAP10-7</label>
    </interactant>
    <organismsDiffer>false</organismsDiffer>
    <experiments>3</experiments>
</comment>
<comment type="interaction">
    <interactant intactId="EBI-10172150">
        <id>P60370</id>
    </interactant>
    <interactant intactId="EBI-10171774">
        <id>P60410</id>
        <label>KRTAP10-8</label>
    </interactant>
    <organismsDiffer>false</organismsDiffer>
    <experiments>3</experiments>
</comment>
<comment type="interaction">
    <interactant intactId="EBI-10172150">
        <id>P60370</id>
    </interactant>
    <interactant intactId="EBI-1052037">
        <id>Q8IUC1</id>
        <label>KRTAP11-1</label>
    </interactant>
    <organismsDiffer>false</organismsDiffer>
    <experiments>3</experiments>
</comment>
<comment type="interaction">
    <interactant intactId="EBI-10172150">
        <id>P60370</id>
    </interactant>
    <interactant intactId="EBI-10210845">
        <id>P59990</id>
        <label>KRTAP12-1</label>
    </interactant>
    <organismsDiffer>false</organismsDiffer>
    <experiments>3</experiments>
</comment>
<comment type="interaction">
    <interactant intactId="EBI-10172150">
        <id>P60370</id>
    </interactant>
    <interactant intactId="EBI-10176379">
        <id>P59991</id>
        <label>KRTAP12-2</label>
    </interactant>
    <organismsDiffer>false</organismsDiffer>
    <experiments>3</experiments>
</comment>
<comment type="interaction">
    <interactant intactId="EBI-10172150">
        <id>P60370</id>
    </interactant>
    <interactant intactId="EBI-11953846">
        <id>Q52LG2</id>
        <label>KRTAP13-2</label>
    </interactant>
    <organismsDiffer>false</organismsDiffer>
    <experiments>3</experiments>
</comment>
<comment type="interaction">
    <interactant intactId="EBI-10172150">
        <id>P60370</id>
    </interactant>
    <interactant intactId="EBI-10196781">
        <id>P0C7H8</id>
        <label>KRTAP2-3</label>
    </interactant>
    <organismsDiffer>false</organismsDiffer>
    <experiments>3</experiments>
</comment>
<comment type="interaction">
    <interactant intactId="EBI-10172150">
        <id>P60370</id>
    </interactant>
    <interactant intactId="EBI-3957672">
        <id>Q6PEX3</id>
        <label>KRTAP26-1</label>
    </interactant>
    <organismsDiffer>false</organismsDiffer>
    <experiments>3</experiments>
</comment>
<comment type="interaction">
    <interactant intactId="EBI-10172150">
        <id>P60370</id>
    </interactant>
    <interactant intactId="EBI-751260">
        <id>Q9BYR7</id>
        <label>KRTAP3-2</label>
    </interactant>
    <organismsDiffer>false</organismsDiffer>
    <experiments>6</experiments>
</comment>
<comment type="interaction">
    <interactant intactId="EBI-10172150">
        <id>P60370</id>
    </interactant>
    <interactant intactId="EBI-739863">
        <id>Q9BQ66</id>
        <label>KRTAP4-12</label>
    </interactant>
    <organismsDiffer>false</organismsDiffer>
    <experiments>3</experiments>
</comment>
<comment type="interaction">
    <interactant intactId="EBI-10172150">
        <id>P60370</id>
    </interactant>
    <interactant intactId="EBI-10172511">
        <id>Q9BYR5</id>
        <label>KRTAP4-2</label>
    </interactant>
    <organismsDiffer>false</organismsDiffer>
    <experiments>8</experiments>
</comment>
<comment type="interaction">
    <interactant intactId="EBI-10172150">
        <id>P60370</id>
    </interactant>
    <interactant intactId="EBI-11958132">
        <id>Q9BYR3</id>
        <label>KRTAP4-4</label>
    </interactant>
    <organismsDiffer>false</organismsDiffer>
    <experiments>3</experiments>
</comment>
<comment type="interaction">
    <interactant intactId="EBI-10172150">
        <id>P60370</id>
    </interactant>
    <interactant intactId="EBI-10250562">
        <id>Q6L8G9</id>
        <label>KRTAP5-6</label>
    </interactant>
    <organismsDiffer>false</organismsDiffer>
    <experiments>3</experiments>
</comment>
<comment type="interaction">
    <interactant intactId="EBI-10172150">
        <id>P60370</id>
    </interactant>
    <interactant intactId="EBI-3958099">
        <id>P26371</id>
        <label>KRTAP5-9</label>
    </interactant>
    <organismsDiffer>false</organismsDiffer>
    <experiments>8</experiments>
</comment>
<comment type="interaction">
    <interactant intactId="EBI-10172150">
        <id>P60370</id>
    </interactant>
    <interactant intactId="EBI-1044640">
        <id>Q9BYQ4</id>
        <label>KRTAP9-2</label>
    </interactant>
    <organismsDiffer>false</organismsDiffer>
    <experiments>5</experiments>
</comment>
<comment type="interaction">
    <interactant intactId="EBI-10172150">
        <id>P60370</id>
    </interactant>
    <interactant intactId="EBI-1043191">
        <id>Q9BYQ3</id>
        <label>KRTAP9-3</label>
    </interactant>
    <organismsDiffer>false</organismsDiffer>
    <experiments>3</experiments>
</comment>
<comment type="interaction">
    <interactant intactId="EBI-10172150">
        <id>P60370</id>
    </interactant>
    <interactant intactId="EBI-10185730">
        <id>Q9BYQ2</id>
        <label>KRTAP9-4</label>
    </interactant>
    <organismsDiffer>false</organismsDiffer>
    <experiments>5</experiments>
</comment>
<comment type="interaction">
    <interactant intactId="EBI-10172150">
        <id>P60370</id>
    </interactant>
    <interactant intactId="EBI-11958364">
        <id>Q9BYQ0</id>
        <label>KRTAP9-8</label>
    </interactant>
    <organismsDiffer>false</organismsDiffer>
    <experiments>3</experiments>
</comment>
<comment type="interaction">
    <interactant intactId="EBI-10172150">
        <id>P60370</id>
    </interactant>
    <interactant intactId="EBI-10245913">
        <id>Q5T7P3</id>
        <label>LCE1B</label>
    </interactant>
    <organismsDiffer>false</organismsDiffer>
    <experiments>10</experiments>
</comment>
<comment type="interaction">
    <interactant intactId="EBI-10172150">
        <id>P60370</id>
    </interactant>
    <interactant intactId="EBI-12224199">
        <id>Q5T751</id>
        <label>LCE1C</label>
    </interactant>
    <organismsDiffer>false</organismsDiffer>
    <experiments>5</experiments>
</comment>
<comment type="interaction">
    <interactant intactId="EBI-10172150">
        <id>P60370</id>
    </interactant>
    <interactant intactId="EBI-11741311">
        <id>Q5T752</id>
        <label>LCE1D</label>
    </interactant>
    <organismsDiffer>false</organismsDiffer>
    <experiments>3</experiments>
</comment>
<comment type="interaction">
    <interactant intactId="EBI-10172150">
        <id>P60370</id>
    </interactant>
    <interactant intactId="EBI-11955335">
        <id>Q5T753</id>
        <label>LCE1E</label>
    </interactant>
    <organismsDiffer>false</organismsDiffer>
    <experiments>3</experiments>
</comment>
<comment type="interaction">
    <interactant intactId="EBI-10172150">
        <id>P60370</id>
    </interactant>
    <interactant intactId="EBI-10246607">
        <id>Q5TA79</id>
        <label>LCE2A</label>
    </interactant>
    <organismsDiffer>false</organismsDiffer>
    <experiments>6</experiments>
</comment>
<comment type="interaction">
    <interactant intactId="EBI-10172150">
        <id>P60370</id>
    </interactant>
    <interactant intactId="EBI-11973993">
        <id>Q5TA81</id>
        <label>LCE2C</label>
    </interactant>
    <organismsDiffer>false</organismsDiffer>
    <experiments>3</experiments>
</comment>
<comment type="interaction">
    <interactant intactId="EBI-10172150">
        <id>P60370</id>
    </interactant>
    <interactant intactId="EBI-10246750">
        <id>Q5TA82</id>
        <label>LCE2D</label>
    </interactant>
    <organismsDiffer>false</organismsDiffer>
    <experiments>3</experiments>
</comment>
<comment type="interaction">
    <interactant intactId="EBI-10172150">
        <id>P60370</id>
    </interactant>
    <interactant intactId="EBI-11974495">
        <id>Q5TA77</id>
        <label>LCE3B</label>
    </interactant>
    <organismsDiffer>false</organismsDiffer>
    <experiments>3</experiments>
</comment>
<comment type="interaction">
    <interactant intactId="EBI-10172150">
        <id>P60370</id>
    </interactant>
    <interactant intactId="EBI-10245291">
        <id>Q5T5A8</id>
        <label>LCE3C</label>
    </interactant>
    <organismsDiffer>false</organismsDiffer>
    <experiments>7</experiments>
</comment>
<comment type="interaction">
    <interactant intactId="EBI-10172150">
        <id>P60370</id>
    </interactant>
    <interactant intactId="EBI-6658837">
        <id>Q9BYE3</id>
        <label>LCE3D</label>
    </interactant>
    <organismsDiffer>false</organismsDiffer>
    <experiments>6</experiments>
</comment>
<comment type="interaction">
    <interactant intactId="EBI-10172150">
        <id>P60370</id>
    </interactant>
    <interactant intactId="EBI-10245456">
        <id>Q5T5B0</id>
        <label>LCE3E</label>
    </interactant>
    <organismsDiffer>false</organismsDiffer>
    <experiments>8</experiments>
</comment>
<comment type="interaction">
    <interactant intactId="EBI-10172150">
        <id>P60370</id>
    </interactant>
    <interactant intactId="EBI-10246358">
        <id>Q5TA78</id>
        <label>LCE4A</label>
    </interactant>
    <organismsDiffer>false</organismsDiffer>
    <experiments>3</experiments>
</comment>
<comment type="interaction">
    <interactant intactId="EBI-10172150">
        <id>P60370</id>
    </interactant>
    <interactant intactId="EBI-11955689">
        <id>Q5TCM9</id>
        <label>LCE5A</label>
    </interactant>
    <organismsDiffer>false</organismsDiffer>
    <experiments>3</experiments>
</comment>
<comment type="interaction">
    <interactant intactId="EBI-10172150">
        <id>P60370</id>
    </interactant>
    <interactant intactId="EBI-18115868">
        <id>Q5T871</id>
        <label>LELP1</label>
    </interactant>
    <organismsDiffer>false</organismsDiffer>
    <experiments>3</experiments>
</comment>
<comment type="interaction">
    <interactant intactId="EBI-10172150">
        <id>P60370</id>
    </interactant>
    <interactant intactId="EBI-10257651">
        <id>Q7Z4I7-5</id>
        <label>LIMS2</label>
    </interactant>
    <organismsDiffer>false</organismsDiffer>
    <experiments>3</experiments>
</comment>
<comment type="interaction">
    <interactant intactId="EBI-10172150">
        <id>P60370</id>
    </interactant>
    <interactant intactId="EBI-10198848">
        <id>Q9P127</id>
        <label>LUZP4</label>
    </interactant>
    <organismsDiffer>false</organismsDiffer>
    <experiments>3</experiments>
</comment>
<comment type="interaction">
    <interactant intactId="EBI-10172150">
        <id>P60370</id>
    </interactant>
    <interactant intactId="EBI-748397">
        <id>P50222</id>
        <label>MEOX2</label>
    </interactant>
    <organismsDiffer>false</organismsDiffer>
    <experiments>3</experiments>
</comment>
<comment type="interaction">
    <interactant intactId="EBI-10172150">
        <id>P60370</id>
    </interactant>
    <interactant intactId="EBI-16439278">
        <id>Q6FHY5</id>
        <label>MEOX2</label>
    </interactant>
    <organismsDiffer>false</organismsDiffer>
    <experiments>3</experiments>
</comment>
<comment type="interaction">
    <interactant intactId="EBI-10172150">
        <id>P60370</id>
    </interactant>
    <interactant intactId="EBI-10230628">
        <id>Q13875</id>
        <label>MOBP</label>
    </interactant>
    <organismsDiffer>false</organismsDiffer>
    <experiments>3</experiments>
</comment>
<comment type="interaction">
    <interactant intactId="EBI-10172150">
        <id>P60370</id>
    </interactant>
    <interactant intactId="EBI-10172129">
        <id>A1L3X4</id>
        <label>MT1DP</label>
    </interactant>
    <organismsDiffer>false</organismsDiffer>
    <experiments>3</experiments>
</comment>
<comment type="interaction">
    <interactant intactId="EBI-10172150">
        <id>P60370</id>
    </interactant>
    <interactant intactId="EBI-10211940">
        <id>P50539-3</id>
        <label>MXI1</label>
    </interactant>
    <organismsDiffer>false</organismsDiffer>
    <experiments>3</experiments>
</comment>
<comment type="interaction">
    <interactant intactId="EBI-10172150">
        <id>P60370</id>
    </interactant>
    <interactant intactId="EBI-747693">
        <id>P41227</id>
        <label>NAA10</label>
    </interactant>
    <organismsDiffer>false</organismsDiffer>
    <experiments>3</experiments>
</comment>
<comment type="interaction">
    <interactant intactId="EBI-10172150">
        <id>P60370</id>
    </interactant>
    <interactant intactId="EBI-718419">
        <id>Q92692</id>
        <label>NECTIN2</label>
    </interactant>
    <organismsDiffer>false</organismsDiffer>
    <experiments>3</experiments>
</comment>
<comment type="interaction">
    <interactant intactId="EBI-10172150">
        <id>P60370</id>
    </interactant>
    <interactant intactId="EBI-945833">
        <id>Q7Z3S9</id>
        <label>NOTCH2NLA</label>
    </interactant>
    <organismsDiffer>false</organismsDiffer>
    <experiments>3</experiments>
</comment>
<comment type="interaction">
    <interactant intactId="EBI-10172150">
        <id>P60370</id>
    </interactant>
    <interactant intactId="EBI-22310682">
        <id>P0DPK4</id>
        <label>NOTCH2NLC</label>
    </interactant>
    <organismsDiffer>false</organismsDiffer>
    <experiments>3</experiments>
</comment>
<comment type="interaction">
    <interactant intactId="EBI-10172150">
        <id>P60370</id>
    </interactant>
    <interactant intactId="EBI-748927">
        <id>Q9NQX5</id>
        <label>NPDC1</label>
    </interactant>
    <organismsDiffer>false</organismsDiffer>
    <experiments>3</experiments>
</comment>
<comment type="interaction">
    <interactant intactId="EBI-10172150">
        <id>P60370</id>
    </interactant>
    <interactant intactId="EBI-721550">
        <id>P22736</id>
        <label>NR4A1</label>
    </interactant>
    <organismsDiffer>false</organismsDiffer>
    <experiments>3</experiments>
</comment>
<comment type="interaction">
    <interactant intactId="EBI-10172150">
        <id>P60370</id>
    </interactant>
    <interactant intactId="EBI-13644623">
        <id>Q92570</id>
        <label>NR4A3</label>
    </interactant>
    <organismsDiffer>false</organismsDiffer>
    <experiments>5</experiments>
</comment>
<comment type="interaction">
    <interactant intactId="EBI-10172150">
        <id>P60370</id>
    </interactant>
    <interactant intactId="EBI-741158">
        <id>Q96HA8</id>
        <label>NTAQ1</label>
    </interactant>
    <organismsDiffer>false</organismsDiffer>
    <experiments>3</experiments>
</comment>
<comment type="interaction">
    <interactant intactId="EBI-10172150">
        <id>P60370</id>
    </interactant>
    <interactant intactId="EBI-1210753">
        <id>Q7Z417</id>
        <label>NUFIP2</label>
    </interactant>
    <organismsDiffer>false</organismsDiffer>
    <experiments>6</experiments>
</comment>
<comment type="interaction">
    <interactant intactId="EBI-10172150">
        <id>P60370</id>
    </interactant>
    <interactant intactId="EBI-740446">
        <id>P32242</id>
        <label>OTX1</label>
    </interactant>
    <organismsDiffer>false</organismsDiffer>
    <experiments>6</experiments>
</comment>
<comment type="interaction">
    <interactant intactId="EBI-10172150">
        <id>P60370</id>
    </interactant>
    <interactant intactId="EBI-17236143">
        <id>Q12837</id>
        <label>POU4F2</label>
    </interactant>
    <organismsDiffer>false</organismsDiffer>
    <experiments>3</experiments>
</comment>
<comment type="interaction">
    <interactant intactId="EBI-10172150">
        <id>P60370</id>
    </interactant>
    <interactant intactId="EBI-1053424">
        <id>O43741</id>
        <label>PRKAB2</label>
    </interactant>
    <organismsDiffer>false</organismsDiffer>
    <experiments>3</experiments>
</comment>
<comment type="interaction">
    <interactant intactId="EBI-10172150">
        <id>P60370</id>
    </interactant>
    <interactant intactId="EBI-1181439">
        <id>P54619</id>
        <label>PRKAG1</label>
    </interactant>
    <organismsDiffer>false</organismsDiffer>
    <experiments>3</experiments>
</comment>
<comment type="interaction">
    <interactant intactId="EBI-10172150">
        <id>P60370</id>
    </interactant>
    <interactant intactId="EBI-740924">
        <id>Q9NZ81</id>
        <label>PRR13</label>
    </interactant>
    <organismsDiffer>false</organismsDiffer>
    <experiments>3</experiments>
</comment>
<comment type="interaction">
    <interactant intactId="EBI-10172150">
        <id>P60370</id>
    </interactant>
    <interactant intactId="EBI-12806054">
        <id>P10745</id>
        <label>RBP3</label>
    </interactant>
    <organismsDiffer>false</organismsDiffer>
    <experiments>3</experiments>
</comment>
<comment type="interaction">
    <interactant intactId="EBI-10172150">
        <id>P60370</id>
    </interactant>
    <interactant intactId="EBI-748391">
        <id>Q9BWG6</id>
        <label>SCNM1</label>
    </interactant>
    <organismsDiffer>false</organismsDiffer>
    <experiments>3</experiments>
</comment>
<comment type="interaction">
    <interactant intactId="EBI-10172150">
        <id>P60370</id>
    </interactant>
    <interactant intactId="EBI-10313866">
        <id>Q9NUL5</id>
        <label>SHFL</label>
    </interactant>
    <organismsDiffer>false</organismsDiffer>
    <experiments>3</experiments>
</comment>
<comment type="interaction">
    <interactant intactId="EBI-10172150">
        <id>P60370</id>
    </interactant>
    <interactant intactId="EBI-11955083">
        <id>Q9NUL5-4</id>
        <label>SHFL</label>
    </interactant>
    <organismsDiffer>false</organismsDiffer>
    <experiments>3</experiments>
</comment>
<comment type="interaction">
    <interactant intactId="EBI-10172150">
        <id>P60370</id>
    </interactant>
    <interactant intactId="EBI-1759386">
        <id>Q9UHI7</id>
        <label>SLC23A1</label>
    </interactant>
    <organismsDiffer>false</organismsDiffer>
    <experiments>3</experiments>
</comment>
<comment type="interaction">
    <interactant intactId="EBI-10172150">
        <id>P60370</id>
    </interactant>
    <interactant intactId="EBI-10311198">
        <id>Q9NP91</id>
        <label>SLC6A20</label>
    </interactant>
    <organismsDiffer>false</organismsDiffer>
    <experiments>3</experiments>
</comment>
<comment type="interaction">
    <interactant intactId="EBI-10172150">
        <id>P60370</id>
    </interactant>
    <interactant intactId="EBI-750494">
        <id>P49901</id>
        <label>SMCP</label>
    </interactant>
    <organismsDiffer>false</organismsDiffer>
    <experiments>3</experiments>
</comment>
<comment type="interaction">
    <interactant intactId="EBI-10172150">
        <id>P60370</id>
    </interactant>
    <interactant intactId="EBI-722584">
        <id>Q96E40</id>
        <label>SPACA9</label>
    </interactant>
    <organismsDiffer>false</organismsDiffer>
    <experiments>3</experiments>
</comment>
<comment type="interaction">
    <interactant intactId="EBI-10172150">
        <id>P60370</id>
    </interactant>
    <interactant intactId="EBI-3866665">
        <id>O43609</id>
        <label>SPRY1</label>
    </interactant>
    <organismsDiffer>false</organismsDiffer>
    <experiments>3</experiments>
</comment>
<comment type="interaction">
    <interactant intactId="EBI-10172150">
        <id>P60370</id>
    </interactant>
    <interactant intactId="EBI-742487">
        <id>O43597</id>
        <label>SPRY2</label>
    </interactant>
    <organismsDiffer>false</organismsDiffer>
    <experiments>3</experiments>
</comment>
<comment type="interaction">
    <interactant intactId="EBI-10172150">
        <id>P60370</id>
    </interactant>
    <interactant intactId="EBI-749295">
        <id>O75716</id>
        <label>STK16</label>
    </interactant>
    <organismsDiffer>false</organismsDiffer>
    <experiments>3</experiments>
</comment>
<comment type="interaction">
    <interactant intactId="EBI-10172150">
        <id>P60370</id>
    </interactant>
    <interactant intactId="EBI-745404">
        <id>Q9P2Z0</id>
        <label>THAP10</label>
    </interactant>
    <organismsDiffer>false</organismsDiffer>
    <experiments>3</experiments>
</comment>
<comment type="interaction">
    <interactant intactId="EBI-10172150">
        <id>P60370</id>
    </interactant>
    <interactant intactId="EBI-10241829">
        <id>Q4VB56</id>
        <label>TNP2</label>
    </interactant>
    <organismsDiffer>false</organismsDiffer>
    <experiments>3</experiments>
</comment>
<comment type="interaction">
    <interactant intactId="EBI-10172150">
        <id>P60370</id>
    </interactant>
    <interactant intactId="EBI-949753">
        <id>Q63HR2</id>
        <label>TNS2</label>
    </interactant>
    <organismsDiffer>false</organismsDiffer>
    <experiments>3</experiments>
</comment>
<comment type="interaction">
    <interactant intactId="EBI-10172150">
        <id>P60370</id>
    </interactant>
    <interactant intactId="EBI-5235829">
        <id>Q8IWZ5</id>
        <label>TRIM42</label>
    </interactant>
    <organismsDiffer>false</organismsDiffer>
    <experiments>3</experiments>
</comment>
<comment type="interaction">
    <interactant intactId="EBI-10172150">
        <id>P60370</id>
    </interactant>
    <interactant intactId="EBI-5357290">
        <id>O75386</id>
        <label>TULP3</label>
    </interactant>
    <organismsDiffer>false</organismsDiffer>
    <experiments>3</experiments>
</comment>
<comment type="interaction">
    <interactant intactId="EBI-10172150">
        <id>P60370</id>
    </interactant>
    <interactant intactId="EBI-2825190">
        <id>Q86UY0</id>
        <label>TXNDC5</label>
    </interactant>
    <organismsDiffer>false</organismsDiffer>
    <experiments>3</experiments>
</comment>
<comment type="interaction">
    <interactant intactId="EBI-10172150">
        <id>P60370</id>
    </interactant>
    <interactant intactId="EBI-742060">
        <id>Q8TAI1</id>
        <label>TYMSOS</label>
    </interactant>
    <organismsDiffer>false</organismsDiffer>
    <experiments>3</experiments>
</comment>
<comment type="interaction">
    <interactant intactId="EBI-10172150">
        <id>P60370</id>
    </interactant>
    <interactant intactId="EBI-5457544">
        <id>Q9BRU9</id>
        <label>UTP23</label>
    </interactant>
    <organismsDiffer>false</organismsDiffer>
    <experiments>3</experiments>
</comment>
<comment type="interaction">
    <interactant intactId="EBI-10172150">
        <id>P60370</id>
    </interactant>
    <interactant intactId="EBI-10223946">
        <id>Q06250</id>
        <label>WT1-AS</label>
    </interactant>
    <organismsDiffer>false</organismsDiffer>
    <experiments>3</experiments>
</comment>
<comment type="interaction">
    <interactant intactId="EBI-10172150">
        <id>P60370</id>
    </interactant>
    <interactant intactId="EBI-765538">
        <id>P25490</id>
        <label>YY1</label>
    </interactant>
    <organismsDiffer>false</organismsDiffer>
    <experiments>3</experiments>
</comment>
<comment type="interaction">
    <interactant intactId="EBI-10172150">
        <id>P60370</id>
    </interactant>
    <interactant intactId="EBI-744471">
        <id>O43167</id>
        <label>ZBTB24</label>
    </interactant>
    <organismsDiffer>false</organismsDiffer>
    <experiments>3</experiments>
</comment>
<comment type="interaction">
    <interactant intactId="EBI-10172150">
        <id>P60370</id>
    </interactant>
    <interactant intactId="EBI-744864">
        <id>P10074</id>
        <label>ZBTB48</label>
    </interactant>
    <organismsDiffer>false</organismsDiffer>
    <experiments>3</experiments>
</comment>
<comment type="interaction">
    <interactant intactId="EBI-10172150">
        <id>P60370</id>
    </interactant>
    <interactant intactId="EBI-750052">
        <id>Q9Y260</id>
        <label>ZFAB</label>
    </interactant>
    <organismsDiffer>false</organismsDiffer>
    <experiments>3</experiments>
</comment>
<comment type="interaction">
    <interactant intactId="EBI-10172150">
        <id>P60370</id>
    </interactant>
    <interactant intactId="EBI-2849569">
        <id>Q9BQ24</id>
        <label>ZFYVE21</label>
    </interactant>
    <organismsDiffer>false</organismsDiffer>
    <experiments>3</experiments>
</comment>
<comment type="interaction">
    <interactant intactId="EBI-10172150">
        <id>P60370</id>
    </interactant>
    <interactant intactId="EBI-2555767">
        <id>Q15973</id>
        <label>ZNF124</label>
    </interactant>
    <organismsDiffer>false</organismsDiffer>
    <experiments>3</experiments>
</comment>
<comment type="interaction">
    <interactant intactId="EBI-10172150">
        <id>P60370</id>
    </interactant>
    <interactant intactId="EBI-717634">
        <id>P17024</id>
        <label>ZNF20</label>
    </interactant>
    <organismsDiffer>false</organismsDiffer>
    <experiments>3</experiments>
</comment>
<comment type="interaction">
    <interactant intactId="EBI-10172150">
        <id>P60370</id>
    </interactant>
    <interactant intactId="EBI-2826570">
        <id>Q14C61</id>
        <label>ZNF264</label>
    </interactant>
    <organismsDiffer>false</organismsDiffer>
    <experiments>3</experiments>
</comment>
<comment type="interaction">
    <interactant intactId="EBI-10172150">
        <id>P60370</id>
    </interactant>
    <interactant intactId="EBI-3922471">
        <id>Q14593</id>
        <label>ZNF273</label>
    </interactant>
    <organismsDiffer>false</organismsDiffer>
    <experiments>3</experiments>
</comment>
<comment type="interaction">
    <interactant intactId="EBI-10172150">
        <id>P60370</id>
    </interactant>
    <interactant intactId="EBI-10310244">
        <id>Q9HBT8-2</id>
        <label>ZNF286A</label>
    </interactant>
    <organismsDiffer>false</organismsDiffer>
    <experiments>3</experiments>
</comment>
<comment type="interaction">
    <interactant intactId="EBI-10172150">
        <id>P60370</id>
    </interactant>
    <interactant intactId="EBI-1965483">
        <id>P17041</id>
        <label>ZNF32</label>
    </interactant>
    <organismsDiffer>false</organismsDiffer>
    <experiments>3</experiments>
</comment>
<comment type="interaction">
    <interactant intactId="EBI-10172150">
        <id>P60370</id>
    </interactant>
    <interactant intactId="EBI-10173019">
        <id>A2RRD8</id>
        <label>ZNF320</label>
    </interactant>
    <organismsDiffer>false</organismsDiffer>
    <experiments>3</experiments>
</comment>
<comment type="interaction">
    <interactant intactId="EBI-10172150">
        <id>P60370</id>
    </interactant>
    <interactant intactId="EBI-7233259">
        <id>Q86UD4</id>
        <label>ZNF329</label>
    </interactant>
    <organismsDiffer>false</organismsDiffer>
    <experiments>3</experiments>
</comment>
<comment type="interaction">
    <interactant intactId="EBI-10172150">
        <id>P60370</id>
    </interactant>
    <interactant intactId="EBI-10264496">
        <id>Q8IZ26</id>
        <label>ZNF34</label>
    </interactant>
    <organismsDiffer>false</organismsDiffer>
    <experiments>3</experiments>
</comment>
<comment type="interaction">
    <interactant intactId="EBI-10172150">
        <id>P60370</id>
    </interactant>
    <interactant intactId="EBI-740727">
        <id>Q8TAU3</id>
        <label>ZNF417</label>
    </interactant>
    <organismsDiffer>false</organismsDiffer>
    <experiments>5</experiments>
</comment>
<comment type="interaction">
    <interactant intactId="EBI-10172150">
        <id>P60370</id>
    </interactant>
    <interactant intactId="EBI-10267553">
        <id>Q8N7K0</id>
        <label>ZNF433</label>
    </interactant>
    <organismsDiffer>false</organismsDiffer>
    <experiments>3</experiments>
</comment>
<comment type="interaction">
    <interactant intactId="EBI-10172150">
        <id>P60370</id>
    </interactant>
    <interactant intactId="EBI-747580">
        <id>Q8NDP4</id>
        <label>ZNF439</label>
    </interactant>
    <organismsDiffer>false</organismsDiffer>
    <experiments>3</experiments>
</comment>
<comment type="interaction">
    <interactant intactId="EBI-10172150">
        <id>P60370</id>
    </interactant>
    <interactant intactId="EBI-726439">
        <id>Q8IYI8</id>
        <label>ZNF440</label>
    </interactant>
    <organismsDiffer>false</organismsDiffer>
    <experiments>3</experiments>
</comment>
<comment type="interaction">
    <interactant intactId="EBI-10172150">
        <id>P60370</id>
    </interactant>
    <interactant intactId="EBI-746605">
        <id>Q9BR84</id>
        <label>ZNF559</label>
    </interactant>
    <organismsDiffer>false</organismsDiffer>
    <experiments>4</experiments>
</comment>
<comment type="interaction">
    <interactant intactId="EBI-10172150">
        <id>P60370</id>
    </interactant>
    <interactant intactId="EBI-10172590">
        <id>Q7Z3I7</id>
        <label>ZNF572</label>
    </interactant>
    <organismsDiffer>false</organismsDiffer>
    <experiments>3</experiments>
</comment>
<comment type="interaction">
    <interactant intactId="EBI-10172150">
        <id>P60370</id>
    </interactant>
    <interactant intactId="EBI-11955189">
        <id>Q96N58</id>
        <label>ZNF578</label>
    </interactant>
    <organismsDiffer>false</organismsDiffer>
    <experiments>3</experiments>
</comment>
<comment type="interaction">
    <interactant intactId="EBI-10172150">
        <id>P60370</id>
    </interactant>
    <interactant intactId="EBI-6427977">
        <id>Q96SQ5</id>
        <label>ZNF587</label>
    </interactant>
    <organismsDiffer>false</organismsDiffer>
    <experiments>6</experiments>
</comment>
<comment type="interaction">
    <interactant intactId="EBI-10172150">
        <id>P60370</id>
    </interactant>
    <interactant intactId="EBI-745276">
        <id>Q9BS34</id>
        <label>ZNF670</label>
    </interactant>
    <organismsDiffer>false</organismsDiffer>
    <experiments>3</experiments>
</comment>
<comment type="interaction">
    <interactant intactId="EBI-10172150">
        <id>P60370</id>
    </interactant>
    <interactant intactId="EBI-745567">
        <id>Q8IYX0</id>
        <label>ZNF679</label>
    </interactant>
    <organismsDiffer>false</organismsDiffer>
    <experiments>3</experiments>
</comment>
<comment type="interaction">
    <interactant intactId="EBI-10172150">
        <id>P60370</id>
    </interactant>
    <interactant intactId="EBI-11090299">
        <id>Q9H7X3</id>
        <label>ZNF696</label>
    </interactant>
    <organismsDiffer>false</organismsDiffer>
    <experiments>3</experiments>
</comment>
<comment type="interaction">
    <interactant intactId="EBI-10172150">
        <id>P60370</id>
    </interactant>
    <interactant intactId="EBI-10265733">
        <id>Q8N508</id>
        <label>ZNF697</label>
    </interactant>
    <organismsDiffer>false</organismsDiffer>
    <experiments>3</experiments>
</comment>
<comment type="interaction">
    <interactant intactId="EBI-10172150">
        <id>P60370</id>
    </interactant>
    <interactant intactId="EBI-748111">
        <id>Q96C28</id>
        <label>ZNF707</label>
    </interactant>
    <organismsDiffer>false</organismsDiffer>
    <experiments>3</experiments>
</comment>
<comment type="interaction">
    <interactant intactId="EBI-10172150">
        <id>P60370</id>
    </interactant>
    <interactant intactId="EBI-3925400">
        <id>A8K8V0</id>
        <label>ZNF785</label>
    </interactant>
    <organismsDiffer>false</organismsDiffer>
    <experiments>3</experiments>
</comment>
<comment type="interaction">
    <interactant intactId="EBI-10172150">
        <id>P60370</id>
    </interactant>
    <interactant intactId="EBI-10240849">
        <id>Q3KQV3</id>
        <label>ZNF792</label>
    </interactant>
    <organismsDiffer>false</organismsDiffer>
    <experiments>3</experiments>
</comment>
<comment type="interaction">
    <interactant intactId="EBI-10172150">
        <id>P60370</id>
    </interactant>
    <interactant intactId="EBI-10281938">
        <id>Q9Y5A6</id>
        <label>ZSCAN21</label>
    </interactant>
    <organismsDiffer>false</organismsDiffer>
    <experiments>3</experiments>
</comment>
<comment type="interaction">
    <interactant intactId="EBI-10172150">
        <id>P60370</id>
    </interactant>
    <interactant intactId="EBI-3920053">
        <id>Q16670</id>
        <label>ZSCAN26</label>
    </interactant>
    <organismsDiffer>false</organismsDiffer>
    <experiments>3</experiments>
</comment>
<comment type="interaction">
    <interactant intactId="EBI-10172150">
        <id>P60370</id>
    </interactant>
    <interactant intactId="EBI-10243533">
        <id>Q5BKY6</id>
    </interactant>
    <organismsDiffer>false</organismsDiffer>
    <experiments>3</experiments>
</comment>
<comment type="interaction">
    <interactant intactId="EBI-10172150">
        <id>P60370</id>
    </interactant>
    <interactant intactId="EBI-10248413">
        <id>Q5XG85</id>
    </interactant>
    <organismsDiffer>false</organismsDiffer>
    <experiments>3</experiments>
</comment>
<comment type="interaction">
    <interactant intactId="EBI-10172150">
        <id>P60370</id>
    </interactant>
    <interactant intactId="EBI-10315054">
        <id>Q9NWL9</id>
    </interactant>
    <organismsDiffer>false</organismsDiffer>
    <experiments>3</experiments>
</comment>
<comment type="tissue specificity">
    <text evidence="1 2">Restricted to a narrow region of the hair fiber cuticle, lying approximately 20 cell layers above the apex of the dermal papilla of the hair root; not detected in any other tissues.</text>
</comment>
<comment type="similarity">
    <text evidence="4">Belongs to the KRTAP type 10 family.</text>
</comment>
<evidence type="ECO:0000269" key="1">
    <source>
    </source>
</evidence>
<evidence type="ECO:0000269" key="2">
    <source>
    </source>
</evidence>
<evidence type="ECO:0000269" key="3">
    <source>
    </source>
</evidence>
<evidence type="ECO:0000305" key="4"/>
<proteinExistence type="evidence at protein level"/>
<accession>P60370</accession>
<accession>Q0VAR7</accession>
<accession>Q0VAR8</accession>
<accession>Q70LJ3</accession>
<gene>
    <name type="primary">KRTAP10-5</name>
    <name type="synonym">KAP10.5</name>
    <name type="synonym">KAP18-5</name>
    <name type="synonym">KRTAP10.5</name>
    <name type="synonym">KRTAP18-5</name>
    <name type="synonym">KRTAP18.5</name>
</gene>
<dbReference type="EMBL" id="AB076352">
    <property type="protein sequence ID" value="BAD01539.1"/>
    <property type="molecule type" value="mRNA"/>
</dbReference>
<dbReference type="EMBL" id="AP001067">
    <property type="status" value="NOT_ANNOTATED_CDS"/>
    <property type="molecule type" value="Genomic_DNA"/>
</dbReference>
<dbReference type="EMBL" id="BC120949">
    <property type="protein sequence ID" value="AAI20950.1"/>
    <property type="molecule type" value="mRNA"/>
</dbReference>
<dbReference type="EMBL" id="BC120950">
    <property type="protein sequence ID" value="AAI20951.1"/>
    <property type="molecule type" value="mRNA"/>
</dbReference>
<dbReference type="EMBL" id="AJ566384">
    <property type="protein sequence ID" value="CAD97464.1"/>
    <property type="molecule type" value="mRNA"/>
</dbReference>
<dbReference type="CCDS" id="CCDS42958.1"/>
<dbReference type="RefSeq" id="NP_941967.3">
    <property type="nucleotide sequence ID" value="NM_198694.3"/>
</dbReference>
<dbReference type="FunCoup" id="P60370">
    <property type="interactions" value="132"/>
</dbReference>
<dbReference type="IntAct" id="P60370">
    <property type="interactions" value="139"/>
</dbReference>
<dbReference type="STRING" id="9606.ENSP00000383223"/>
<dbReference type="BioMuta" id="KRTAP10-5"/>
<dbReference type="DMDM" id="215274018"/>
<dbReference type="MassIVE" id="P60370"/>
<dbReference type="PaxDb" id="9606-ENSP00000383223"/>
<dbReference type="PeptideAtlas" id="P60370"/>
<dbReference type="ProteomicsDB" id="57199"/>
<dbReference type="Antibodypedia" id="82349">
    <property type="antibodies" value="1 antibodies from 1 providers"/>
</dbReference>
<dbReference type="Ensembl" id="ENST00000400372.1">
    <property type="protein sequence ID" value="ENSP00000383223.1"/>
    <property type="gene ID" value="ENSG00000241123.1"/>
</dbReference>
<dbReference type="GeneID" id="386680"/>
<dbReference type="KEGG" id="hsa:386680"/>
<dbReference type="MANE-Select" id="ENST00000400372.1">
    <property type="protein sequence ID" value="ENSP00000383223.1"/>
    <property type="RefSeq nucleotide sequence ID" value="NM_198694.3"/>
    <property type="RefSeq protein sequence ID" value="NP_941967.3"/>
</dbReference>
<dbReference type="UCSC" id="uc002zfl.2">
    <property type="organism name" value="human"/>
</dbReference>
<dbReference type="AGR" id="HGNC:22969"/>
<dbReference type="CTD" id="386680"/>
<dbReference type="GeneCards" id="KRTAP10-5"/>
<dbReference type="HGNC" id="HGNC:22969">
    <property type="gene designation" value="KRTAP10-5"/>
</dbReference>
<dbReference type="HPA" id="ENSG00000241123">
    <property type="expression patterns" value="Tissue enriched (skin)"/>
</dbReference>
<dbReference type="neXtProt" id="NX_P60370"/>
<dbReference type="OpenTargets" id="ENSG00000241123"/>
<dbReference type="PharmGKB" id="PA134950015"/>
<dbReference type="VEuPathDB" id="HostDB:ENSG00000241123"/>
<dbReference type="eggNOG" id="KOG4726">
    <property type="taxonomic scope" value="Eukaryota"/>
</dbReference>
<dbReference type="GeneTree" id="ENSGT00940000158579"/>
<dbReference type="HOGENOM" id="CLU_062832_0_0_1"/>
<dbReference type="InParanoid" id="P60370"/>
<dbReference type="OMA" id="CGQTPCK"/>
<dbReference type="OrthoDB" id="9540251at2759"/>
<dbReference type="PAN-GO" id="P60370">
    <property type="GO annotations" value="0 GO annotations based on evolutionary models"/>
</dbReference>
<dbReference type="PhylomeDB" id="P60370"/>
<dbReference type="TreeFam" id="TF351356"/>
<dbReference type="PathwayCommons" id="P60370"/>
<dbReference type="Reactome" id="R-HSA-6805567">
    <property type="pathway name" value="Keratinization"/>
</dbReference>
<dbReference type="SignaLink" id="P60370"/>
<dbReference type="Pharos" id="P60370">
    <property type="development level" value="Tdark"/>
</dbReference>
<dbReference type="PRO" id="PR:P60370"/>
<dbReference type="Proteomes" id="UP000005640">
    <property type="component" value="Chromosome 21"/>
</dbReference>
<dbReference type="RNAct" id="P60370">
    <property type="molecule type" value="protein"/>
</dbReference>
<dbReference type="Bgee" id="ENSG00000241123">
    <property type="expression patterns" value="Expressed in primordial germ cell in gonad and 7 other cell types or tissues"/>
</dbReference>
<dbReference type="GO" id="GO:0005829">
    <property type="term" value="C:cytosol"/>
    <property type="evidence" value="ECO:0000304"/>
    <property type="project" value="Reactome"/>
</dbReference>
<dbReference type="GO" id="GO:0045095">
    <property type="term" value="C:keratin filament"/>
    <property type="evidence" value="ECO:0007669"/>
    <property type="project" value="InterPro"/>
</dbReference>
<dbReference type="GO" id="GO:0042802">
    <property type="term" value="F:identical protein binding"/>
    <property type="evidence" value="ECO:0000353"/>
    <property type="project" value="IntAct"/>
</dbReference>
<dbReference type="InterPro" id="IPR002494">
    <property type="entry name" value="KAP"/>
</dbReference>
<dbReference type="PANTHER" id="PTHR23262">
    <property type="entry name" value="KERATIN ASSOCIATED PROTEIN"/>
    <property type="match status" value="1"/>
</dbReference>
<dbReference type="PANTHER" id="PTHR23262:SF170">
    <property type="entry name" value="KERATIN-ASSOCIATED PROTEIN 10-9"/>
    <property type="match status" value="1"/>
</dbReference>
<dbReference type="Pfam" id="PF13885">
    <property type="entry name" value="Keratin_B2_2"/>
    <property type="match status" value="4"/>
</dbReference>
<organism>
    <name type="scientific">Homo sapiens</name>
    <name type="common">Human</name>
    <dbReference type="NCBI Taxonomy" id="9606"/>
    <lineage>
        <taxon>Eukaryota</taxon>
        <taxon>Metazoa</taxon>
        <taxon>Chordata</taxon>
        <taxon>Craniata</taxon>
        <taxon>Vertebrata</taxon>
        <taxon>Euteleostomi</taxon>
        <taxon>Mammalia</taxon>
        <taxon>Eutheria</taxon>
        <taxon>Euarchontoglires</taxon>
        <taxon>Primates</taxon>
        <taxon>Haplorrhini</taxon>
        <taxon>Catarrhini</taxon>
        <taxon>Hominidae</taxon>
        <taxon>Homo</taxon>
    </lineage>
</organism>
<keyword id="KW-0416">Keratin</keyword>
<keyword id="KW-1185">Reference proteome</keyword>
<keyword id="KW-0677">Repeat</keyword>
<feature type="chain" id="PRO_0000185213" description="Keratin-associated protein 10-5">
    <location>
        <begin position="1"/>
        <end position="271"/>
    </location>
</feature>
<feature type="repeat" description="1">
    <location>
        <begin position="26"/>
        <end position="30"/>
    </location>
</feature>
<feature type="repeat" description="2">
    <location>
        <begin position="51"/>
        <end position="55"/>
    </location>
</feature>
<feature type="repeat" description="3">
    <location>
        <begin position="73"/>
        <end position="77"/>
    </location>
</feature>
<feature type="repeat" description="4">
    <location>
        <begin position="78"/>
        <end position="82"/>
    </location>
</feature>
<feature type="repeat" description="5">
    <location>
        <begin position="88"/>
        <end position="92"/>
    </location>
</feature>
<feature type="repeat" description="6">
    <location>
        <begin position="93"/>
        <end position="97"/>
    </location>
</feature>
<feature type="repeat" description="7">
    <location>
        <begin position="98"/>
        <end position="102"/>
    </location>
</feature>
<feature type="repeat" description="8">
    <location>
        <begin position="110"/>
        <end position="114"/>
    </location>
</feature>
<feature type="repeat" description="9">
    <location>
        <begin position="120"/>
        <end position="124"/>
    </location>
</feature>
<feature type="repeat" description="10">
    <location>
        <begin position="130"/>
        <end position="134"/>
    </location>
</feature>
<feature type="repeat" description="11">
    <location>
        <begin position="135"/>
        <end position="139"/>
    </location>
</feature>
<feature type="repeat" description="12">
    <location>
        <begin position="140"/>
        <end position="144"/>
    </location>
</feature>
<feature type="repeat" description="13">
    <location>
        <begin position="152"/>
        <end position="156"/>
    </location>
</feature>
<feature type="repeat" description="14">
    <location>
        <begin position="162"/>
        <end position="166"/>
    </location>
</feature>
<feature type="repeat" description="15">
    <location>
        <begin position="177"/>
        <end position="181"/>
    </location>
</feature>
<feature type="repeat" description="16">
    <location>
        <begin position="187"/>
        <end position="191"/>
    </location>
</feature>
<feature type="repeat" description="17">
    <location>
        <begin position="199"/>
        <end position="203"/>
    </location>
</feature>
<feature type="repeat" description="18">
    <location>
        <begin position="209"/>
        <end position="213"/>
    </location>
</feature>
<feature type="repeat" description="19">
    <location>
        <begin position="214"/>
        <end position="218"/>
    </location>
</feature>
<feature type="repeat" description="20">
    <location>
        <begin position="233"/>
        <end position="237"/>
    </location>
</feature>
<feature type="repeat" description="21">
    <location>
        <begin position="240"/>
        <end position="244"/>
    </location>
</feature>
<feature type="repeat" description="22">
    <location>
        <begin position="251"/>
        <end position="255"/>
    </location>
</feature>
<feature type="region of interest" description="22 X 5 AA repeats of C-C-X(3)">
    <location>
        <begin position="26"/>
        <end position="255"/>
    </location>
</feature>
<feature type="sequence variant" id="VAR_062113" description="In dbSNP:rs5017208.">
    <original>C</original>
    <variation>S</variation>
    <location>
        <position position="4"/>
    </location>
</feature>
<feature type="sequence variant" id="VAR_017696" description="In dbSNP:rs2020221." evidence="3">
    <original>D</original>
    <variation>N</variation>
    <location>
        <position position="20"/>
    </location>
</feature>
<feature type="sequence variant" id="VAR_047505" description="In dbSNP:rs380585." evidence="2 3">
    <original>C</original>
    <variation>F</variation>
    <location>
        <position position="183"/>
    </location>
</feature>
<feature type="sequence variant" id="VAR_017697" description="In dbSNP:rs464424." evidence="2 3">
    <original>L</original>
    <variation>V</variation>
    <location>
        <position position="235"/>
    </location>
</feature>
<feature type="sequence variant" id="VAR_047506" description="In dbSNP:rs7509970.">
    <original>Y</original>
    <variation>C</variation>
    <location>
        <position position="247"/>
    </location>
</feature>
<feature type="sequence variant" id="VAR_047507" description="In dbSNP:rs464391." evidence="1 3">
    <original>P</original>
    <variation>R</variation>
    <location>
        <position position="268"/>
    </location>
</feature>
<name>KR105_HUMAN</name>
<reference key="1">
    <citation type="journal article" date="2004" name="Genomics">
        <title>A cluster of 21 keratin-associated protein genes within introns of another gene on human chromosome 21q22.3.</title>
        <authorList>
            <person name="Shibuya K."/>
            <person name="Obayashi I."/>
            <person name="Asakawa S."/>
            <person name="Minoshima S."/>
            <person name="Kudoh J."/>
            <person name="Shimizu N."/>
        </authorList>
    </citation>
    <scope>NUCLEOTIDE SEQUENCE [MRNA]</scope>
    <scope>TISSUE SPECIFICITY</scope>
    <scope>VARIANTS PHE-183 AND VAL-235</scope>
    <source>
        <tissue>Hair root</tissue>
    </source>
</reference>
<reference key="2">
    <citation type="journal article" date="2000" name="Nature">
        <title>The DNA sequence of human chromosome 21.</title>
        <authorList>
            <person name="Hattori M."/>
            <person name="Fujiyama A."/>
            <person name="Taylor T.D."/>
            <person name="Watanabe H."/>
            <person name="Yada T."/>
            <person name="Park H.-S."/>
            <person name="Toyoda A."/>
            <person name="Ishii K."/>
            <person name="Totoki Y."/>
            <person name="Choi D.-K."/>
            <person name="Groner Y."/>
            <person name="Soeda E."/>
            <person name="Ohki M."/>
            <person name="Takagi T."/>
            <person name="Sakaki Y."/>
            <person name="Taudien S."/>
            <person name="Blechschmidt K."/>
            <person name="Polley A."/>
            <person name="Menzel U."/>
            <person name="Delabar J."/>
            <person name="Kumpf K."/>
            <person name="Lehmann R."/>
            <person name="Patterson D."/>
            <person name="Reichwald K."/>
            <person name="Rump A."/>
            <person name="Schillhabel M."/>
            <person name="Schudy A."/>
            <person name="Zimmermann W."/>
            <person name="Rosenthal A."/>
            <person name="Kudoh J."/>
            <person name="Shibuya K."/>
            <person name="Kawasaki K."/>
            <person name="Asakawa S."/>
            <person name="Shintani A."/>
            <person name="Sasaki T."/>
            <person name="Nagamine K."/>
            <person name="Mitsuyama S."/>
            <person name="Antonarakis S.E."/>
            <person name="Minoshima S."/>
            <person name="Shimizu N."/>
            <person name="Nordsiek G."/>
            <person name="Hornischer K."/>
            <person name="Brandt P."/>
            <person name="Scharfe M."/>
            <person name="Schoen O."/>
            <person name="Desario A."/>
            <person name="Reichelt J."/>
            <person name="Kauer G."/>
            <person name="Bloecker H."/>
            <person name="Ramser J."/>
            <person name="Beck A."/>
            <person name="Klages S."/>
            <person name="Hennig S."/>
            <person name="Riesselmann L."/>
            <person name="Dagand E."/>
            <person name="Wehrmeyer S."/>
            <person name="Borzym K."/>
            <person name="Gardiner K."/>
            <person name="Nizetic D."/>
            <person name="Francis F."/>
            <person name="Lehrach H."/>
            <person name="Reinhardt R."/>
            <person name="Yaspo M.-L."/>
        </authorList>
    </citation>
    <scope>NUCLEOTIDE SEQUENCE [LARGE SCALE GENOMIC DNA]</scope>
</reference>
<reference key="3">
    <citation type="journal article" date="2004" name="Genome Res.">
        <title>The status, quality, and expansion of the NIH full-length cDNA project: the Mammalian Gene Collection (MGC).</title>
        <authorList>
            <consortium name="The MGC Project Team"/>
        </authorList>
    </citation>
    <scope>NUCLEOTIDE SEQUENCE [LARGE SCALE MRNA]</scope>
    <scope>VARIANTS ASN-20; PHE-183; VAL-235 AND ARG-268</scope>
</reference>
<reference key="4">
    <citation type="journal article" date="2004" name="J. Invest. Dermatol.">
        <title>Hair keratin associated proteins: characterization of a second high sulfur KAP gene domain on human chromosome 21.</title>
        <authorList>
            <person name="Rogers M.A."/>
            <person name="Langbein L."/>
            <person name="Winter H."/>
            <person name="Beckmann I."/>
            <person name="Praetzel S."/>
            <person name="Schweizer J."/>
        </authorList>
    </citation>
    <scope>NUCLEOTIDE SEQUENCE [MRNA] OF 261-271</scope>
    <scope>VARIANT ARG-268</scope>
    <scope>TISSUE SPECIFICITY</scope>
    <source>
        <tissue>Scalp</tissue>
    </source>
</reference>